<protein>
    <recommendedName>
        <fullName evidence="1">Ribonuclease HII</fullName>
        <shortName evidence="1">RNase HII</shortName>
        <ecNumber evidence="1">3.1.26.4</ecNumber>
    </recommendedName>
</protein>
<feature type="chain" id="PRO_1000031224" description="Ribonuclease HII">
    <location>
        <begin position="1"/>
        <end position="198"/>
    </location>
</feature>
<feature type="domain" description="RNase H type-2" evidence="2">
    <location>
        <begin position="11"/>
        <end position="198"/>
    </location>
</feature>
<feature type="binding site" evidence="1">
    <location>
        <position position="17"/>
    </location>
    <ligand>
        <name>a divalent metal cation</name>
        <dbReference type="ChEBI" id="CHEBI:60240"/>
    </ligand>
</feature>
<feature type="binding site" evidence="1">
    <location>
        <position position="18"/>
    </location>
    <ligand>
        <name>a divalent metal cation</name>
        <dbReference type="ChEBI" id="CHEBI:60240"/>
    </ligand>
</feature>
<feature type="binding site" evidence="1">
    <location>
        <position position="109"/>
    </location>
    <ligand>
        <name>a divalent metal cation</name>
        <dbReference type="ChEBI" id="CHEBI:60240"/>
    </ligand>
</feature>
<name>RNH2_YERPP</name>
<keyword id="KW-0963">Cytoplasm</keyword>
<keyword id="KW-0255">Endonuclease</keyword>
<keyword id="KW-0378">Hydrolase</keyword>
<keyword id="KW-0464">Manganese</keyword>
<keyword id="KW-0479">Metal-binding</keyword>
<keyword id="KW-0540">Nuclease</keyword>
<dbReference type="EC" id="3.1.26.4" evidence="1"/>
<dbReference type="EMBL" id="CP000668">
    <property type="protein sequence ID" value="ABP40039.1"/>
    <property type="molecule type" value="Genomic_DNA"/>
</dbReference>
<dbReference type="RefSeq" id="WP_002212145.1">
    <property type="nucleotide sequence ID" value="NZ_CP009715.1"/>
</dbReference>
<dbReference type="SMR" id="A4TL77"/>
<dbReference type="GeneID" id="57977503"/>
<dbReference type="KEGG" id="ypp:YPDSF_1654"/>
<dbReference type="PATRIC" id="fig|386656.14.peg.2108"/>
<dbReference type="GO" id="GO:0005737">
    <property type="term" value="C:cytoplasm"/>
    <property type="evidence" value="ECO:0007669"/>
    <property type="project" value="UniProtKB-SubCell"/>
</dbReference>
<dbReference type="GO" id="GO:0032299">
    <property type="term" value="C:ribonuclease H2 complex"/>
    <property type="evidence" value="ECO:0007669"/>
    <property type="project" value="TreeGrafter"/>
</dbReference>
<dbReference type="GO" id="GO:0030145">
    <property type="term" value="F:manganese ion binding"/>
    <property type="evidence" value="ECO:0007669"/>
    <property type="project" value="UniProtKB-UniRule"/>
</dbReference>
<dbReference type="GO" id="GO:0003723">
    <property type="term" value="F:RNA binding"/>
    <property type="evidence" value="ECO:0007669"/>
    <property type="project" value="InterPro"/>
</dbReference>
<dbReference type="GO" id="GO:0004523">
    <property type="term" value="F:RNA-DNA hybrid ribonuclease activity"/>
    <property type="evidence" value="ECO:0007669"/>
    <property type="project" value="UniProtKB-UniRule"/>
</dbReference>
<dbReference type="GO" id="GO:0043137">
    <property type="term" value="P:DNA replication, removal of RNA primer"/>
    <property type="evidence" value="ECO:0007669"/>
    <property type="project" value="TreeGrafter"/>
</dbReference>
<dbReference type="GO" id="GO:0006298">
    <property type="term" value="P:mismatch repair"/>
    <property type="evidence" value="ECO:0007669"/>
    <property type="project" value="TreeGrafter"/>
</dbReference>
<dbReference type="CDD" id="cd07182">
    <property type="entry name" value="RNase_HII_bacteria_HII_like"/>
    <property type="match status" value="1"/>
</dbReference>
<dbReference type="FunFam" id="3.30.420.10:FF:000006">
    <property type="entry name" value="Ribonuclease HII"/>
    <property type="match status" value="1"/>
</dbReference>
<dbReference type="Gene3D" id="3.30.420.10">
    <property type="entry name" value="Ribonuclease H-like superfamily/Ribonuclease H"/>
    <property type="match status" value="1"/>
</dbReference>
<dbReference type="HAMAP" id="MF_00052_B">
    <property type="entry name" value="RNase_HII_B"/>
    <property type="match status" value="1"/>
</dbReference>
<dbReference type="InterPro" id="IPR022898">
    <property type="entry name" value="RNase_HII"/>
</dbReference>
<dbReference type="InterPro" id="IPR001352">
    <property type="entry name" value="RNase_HII/HIII"/>
</dbReference>
<dbReference type="InterPro" id="IPR024567">
    <property type="entry name" value="RNase_HII/HIII_dom"/>
</dbReference>
<dbReference type="InterPro" id="IPR012337">
    <property type="entry name" value="RNaseH-like_sf"/>
</dbReference>
<dbReference type="InterPro" id="IPR036397">
    <property type="entry name" value="RNaseH_sf"/>
</dbReference>
<dbReference type="NCBIfam" id="NF000594">
    <property type="entry name" value="PRK00015.1-1"/>
    <property type="match status" value="1"/>
</dbReference>
<dbReference type="NCBIfam" id="NF000595">
    <property type="entry name" value="PRK00015.1-3"/>
    <property type="match status" value="1"/>
</dbReference>
<dbReference type="NCBIfam" id="NF000596">
    <property type="entry name" value="PRK00015.1-4"/>
    <property type="match status" value="1"/>
</dbReference>
<dbReference type="PANTHER" id="PTHR10954">
    <property type="entry name" value="RIBONUCLEASE H2 SUBUNIT A"/>
    <property type="match status" value="1"/>
</dbReference>
<dbReference type="PANTHER" id="PTHR10954:SF18">
    <property type="entry name" value="RIBONUCLEASE HII"/>
    <property type="match status" value="1"/>
</dbReference>
<dbReference type="Pfam" id="PF01351">
    <property type="entry name" value="RNase_HII"/>
    <property type="match status" value="1"/>
</dbReference>
<dbReference type="SUPFAM" id="SSF53098">
    <property type="entry name" value="Ribonuclease H-like"/>
    <property type="match status" value="1"/>
</dbReference>
<dbReference type="PROSITE" id="PS51975">
    <property type="entry name" value="RNASE_H_2"/>
    <property type="match status" value="1"/>
</dbReference>
<comment type="function">
    <text evidence="1">Endonuclease that specifically degrades the RNA of RNA-DNA hybrids.</text>
</comment>
<comment type="catalytic activity">
    <reaction evidence="1">
        <text>Endonucleolytic cleavage to 5'-phosphomonoester.</text>
        <dbReference type="EC" id="3.1.26.4"/>
    </reaction>
</comment>
<comment type="cofactor">
    <cofactor evidence="1">
        <name>Mn(2+)</name>
        <dbReference type="ChEBI" id="CHEBI:29035"/>
    </cofactor>
    <cofactor evidence="1">
        <name>Mg(2+)</name>
        <dbReference type="ChEBI" id="CHEBI:18420"/>
    </cofactor>
    <text evidence="1">Manganese or magnesium. Binds 1 divalent metal ion per monomer in the absence of substrate. May bind a second metal ion after substrate binding.</text>
</comment>
<comment type="subcellular location">
    <subcellularLocation>
        <location evidence="1">Cytoplasm</location>
    </subcellularLocation>
</comment>
<comment type="similarity">
    <text evidence="1">Belongs to the RNase HII family.</text>
</comment>
<evidence type="ECO:0000255" key="1">
    <source>
        <dbReference type="HAMAP-Rule" id="MF_00052"/>
    </source>
</evidence>
<evidence type="ECO:0000255" key="2">
    <source>
        <dbReference type="PROSITE-ProRule" id="PRU01319"/>
    </source>
</evidence>
<sequence length="198" mass="21648">MSETFIYPQANLIAGVDEVGRGPLVGAVVTAAVILDPNRPIVGLADSKKLSEKRRLSLYDEITEKALSWSLGRAEPEEIDQLNILHATMLAMQRAVSGLHIVPDYVLIDGNRCPKLQMPSLAVVKGDSRVAEISAASILAKVTRDREMTELDLLFPEYGFAQHKGYPTAFHLEKLAALGATVHHRRSFGPVKRVLGLV</sequence>
<accession>A4TL77</accession>
<proteinExistence type="inferred from homology"/>
<organism>
    <name type="scientific">Yersinia pestis (strain Pestoides F)</name>
    <dbReference type="NCBI Taxonomy" id="386656"/>
    <lineage>
        <taxon>Bacteria</taxon>
        <taxon>Pseudomonadati</taxon>
        <taxon>Pseudomonadota</taxon>
        <taxon>Gammaproteobacteria</taxon>
        <taxon>Enterobacterales</taxon>
        <taxon>Yersiniaceae</taxon>
        <taxon>Yersinia</taxon>
    </lineage>
</organism>
<gene>
    <name evidence="1" type="primary">rnhB</name>
    <name type="ordered locus">YPDSF_1654</name>
</gene>
<reference key="1">
    <citation type="submission" date="2007-02" db="EMBL/GenBank/DDBJ databases">
        <title>Complete sequence of chromosome of Yersinia pestis Pestoides F.</title>
        <authorList>
            <consortium name="US DOE Joint Genome Institute"/>
            <person name="Copeland A."/>
            <person name="Lucas S."/>
            <person name="Lapidus A."/>
            <person name="Barry K."/>
            <person name="Detter J.C."/>
            <person name="Glavina del Rio T."/>
            <person name="Hammon N."/>
            <person name="Israni S."/>
            <person name="Dalin E."/>
            <person name="Tice H."/>
            <person name="Pitluck S."/>
            <person name="Di Bartolo G."/>
            <person name="Chain P."/>
            <person name="Malfatti S."/>
            <person name="Shin M."/>
            <person name="Vergez L."/>
            <person name="Schmutz J."/>
            <person name="Larimer F."/>
            <person name="Land M."/>
            <person name="Hauser L."/>
            <person name="Worsham P."/>
            <person name="Chu M."/>
            <person name="Bearden S."/>
            <person name="Garcia E."/>
            <person name="Richardson P."/>
        </authorList>
    </citation>
    <scope>NUCLEOTIDE SEQUENCE [LARGE SCALE GENOMIC DNA]</scope>
    <source>
        <strain>Pestoides F</strain>
    </source>
</reference>